<dbReference type="EMBL" id="AY309070">
    <property type="protein sequence ID" value="AAP73441.1"/>
    <property type="molecule type" value="mRNA"/>
</dbReference>
<dbReference type="RefSeq" id="NP_001233629.1">
    <property type="nucleotide sequence ID" value="NM_001246700.1"/>
</dbReference>
<dbReference type="SMR" id="Q7TQN2"/>
<dbReference type="GlyCosmos" id="Q7TQN2">
    <property type="glycosylation" value="5 sites, No reported glycans"/>
</dbReference>
<dbReference type="GeneID" id="100689441"/>
<dbReference type="CTD" id="83639"/>
<dbReference type="OrthoDB" id="9443273at2759"/>
<dbReference type="Proteomes" id="UP000694386">
    <property type="component" value="Unplaced"/>
</dbReference>
<dbReference type="Proteomes" id="UP001108280">
    <property type="component" value="Unplaced"/>
</dbReference>
<dbReference type="GO" id="GO:0001669">
    <property type="term" value="C:acrosomal vesicle"/>
    <property type="evidence" value="ECO:0000250"/>
    <property type="project" value="UniProtKB"/>
</dbReference>
<dbReference type="GO" id="GO:0005576">
    <property type="term" value="C:extracellular region"/>
    <property type="evidence" value="ECO:0000250"/>
    <property type="project" value="UniProtKB"/>
</dbReference>
<dbReference type="GO" id="GO:0005886">
    <property type="term" value="C:plasma membrane"/>
    <property type="evidence" value="ECO:0000250"/>
    <property type="project" value="UniProtKB"/>
</dbReference>
<dbReference type="GO" id="GO:0044853">
    <property type="term" value="C:plasma membrane raft"/>
    <property type="evidence" value="ECO:0007669"/>
    <property type="project" value="TreeGrafter"/>
</dbReference>
<dbReference type="GO" id="GO:0055037">
    <property type="term" value="C:recycling endosome"/>
    <property type="evidence" value="ECO:0000314"/>
    <property type="project" value="MGI"/>
</dbReference>
<dbReference type="GO" id="GO:0098552">
    <property type="term" value="C:side of membrane"/>
    <property type="evidence" value="ECO:0007669"/>
    <property type="project" value="UniProtKB-KW"/>
</dbReference>
<dbReference type="GO" id="GO:0007339">
    <property type="term" value="P:binding of sperm to zona pellucida"/>
    <property type="evidence" value="ECO:0000250"/>
    <property type="project" value="UniProtKB"/>
</dbReference>
<dbReference type="GO" id="GO:0009566">
    <property type="term" value="P:fertilization"/>
    <property type="evidence" value="ECO:0000250"/>
    <property type="project" value="UniProtKB"/>
</dbReference>
<dbReference type="GO" id="GO:0030317">
    <property type="term" value="P:flagellated sperm motility"/>
    <property type="evidence" value="ECO:0000250"/>
    <property type="project" value="UniProtKB"/>
</dbReference>
<dbReference type="GO" id="GO:1901317">
    <property type="term" value="P:regulation of flagellated sperm motility"/>
    <property type="evidence" value="ECO:0000250"/>
    <property type="project" value="UniProtKB"/>
</dbReference>
<dbReference type="CDD" id="cd23622">
    <property type="entry name" value="TFP_LU_ECD_TEX101_rpt1"/>
    <property type="match status" value="1"/>
</dbReference>
<dbReference type="CDD" id="cd23634">
    <property type="entry name" value="TFP_LU_ECD_TEX101_rpt2"/>
    <property type="match status" value="1"/>
</dbReference>
<dbReference type="Gene3D" id="2.10.60.10">
    <property type="entry name" value="CD59"/>
    <property type="match status" value="2"/>
</dbReference>
<dbReference type="InterPro" id="IPR051899">
    <property type="entry name" value="Fert-Immune_med_protein"/>
</dbReference>
<dbReference type="InterPro" id="IPR016054">
    <property type="entry name" value="LY6_UPA_recep-like"/>
</dbReference>
<dbReference type="InterPro" id="IPR045860">
    <property type="entry name" value="Snake_toxin-like_sf"/>
</dbReference>
<dbReference type="PANTHER" id="PTHR16529">
    <property type="entry name" value="CD177 ANTIGEN"/>
    <property type="match status" value="1"/>
</dbReference>
<dbReference type="PANTHER" id="PTHR16529:SF3">
    <property type="entry name" value="TESTIS-EXPRESSED PROTEIN 101"/>
    <property type="match status" value="1"/>
</dbReference>
<dbReference type="Pfam" id="PF00021">
    <property type="entry name" value="UPAR_LY6"/>
    <property type="match status" value="2"/>
</dbReference>
<dbReference type="SUPFAM" id="SSF57302">
    <property type="entry name" value="Snake toxin-like"/>
    <property type="match status" value="2"/>
</dbReference>
<evidence type="ECO:0000250" key="1"/>
<evidence type="ECO:0000250" key="2">
    <source>
        <dbReference type="UniProtKB" id="Q924B5"/>
    </source>
</evidence>
<evidence type="ECO:0000250" key="3">
    <source>
        <dbReference type="UniProtKB" id="Q9BY14"/>
    </source>
</evidence>
<evidence type="ECO:0000250" key="4">
    <source>
        <dbReference type="UniProtKB" id="Q9JMI7"/>
    </source>
</evidence>
<evidence type="ECO:0000255" key="5"/>
<proteinExistence type="evidence at transcript level"/>
<feature type="signal peptide" evidence="1">
    <location>
        <begin position="1"/>
        <end position="24"/>
    </location>
</feature>
<feature type="chain" id="PRO_0000247619" description="Testis-expressed protein 101">
    <location>
        <begin position="25"/>
        <end position="226"/>
    </location>
</feature>
<feature type="propeptide" id="PRO_0000247620" description="Removed in mature form" evidence="5">
    <location>
        <begin position="227"/>
        <end position="253"/>
    </location>
</feature>
<feature type="domain" description="UPAR/Ly6 1">
    <location>
        <begin position="53"/>
        <end position="117"/>
    </location>
</feature>
<feature type="domain" description="UPAR/Ly6 2">
    <location>
        <begin position="143"/>
        <end position="218"/>
    </location>
</feature>
<feature type="lipid moiety-binding region" description="GPI-anchor amidated serine" evidence="5">
    <location>
        <position position="226"/>
    </location>
</feature>
<feature type="glycosylation site" description="N-linked (GlcNAc...) asparagine" evidence="5">
    <location>
        <position position="44"/>
    </location>
</feature>
<feature type="glycosylation site" description="N-linked (GlcNAc...) asparagine" evidence="5">
    <location>
        <position position="112"/>
    </location>
</feature>
<feature type="glycosylation site" description="N-linked (GlcNAc...) asparagine" evidence="5">
    <location>
        <position position="117"/>
    </location>
</feature>
<feature type="glycosylation site" description="N-linked (GlcNAc...) asparagine" evidence="5">
    <location>
        <position position="121"/>
    </location>
</feature>
<feature type="glycosylation site" description="N-linked (GlcNAc...) asparagine" evidence="5">
    <location>
        <position position="162"/>
    </location>
</feature>
<organism>
    <name type="scientific">Cricetulus griseus</name>
    <name type="common">Chinese hamster</name>
    <name type="synonym">Cricetulus barabensis griseus</name>
    <dbReference type="NCBI Taxonomy" id="10029"/>
    <lineage>
        <taxon>Eukaryota</taxon>
        <taxon>Metazoa</taxon>
        <taxon>Chordata</taxon>
        <taxon>Craniata</taxon>
        <taxon>Vertebrata</taxon>
        <taxon>Euteleostomi</taxon>
        <taxon>Mammalia</taxon>
        <taxon>Eutheria</taxon>
        <taxon>Euarchontoglires</taxon>
        <taxon>Glires</taxon>
        <taxon>Rodentia</taxon>
        <taxon>Myomorpha</taxon>
        <taxon>Muroidea</taxon>
        <taxon>Cricetidae</taxon>
        <taxon>Cricetinae</taxon>
        <taxon>Cricetulus</taxon>
    </lineage>
</organism>
<keyword id="KW-1003">Cell membrane</keyword>
<keyword id="KW-0968">Cytoplasmic vesicle</keyword>
<keyword id="KW-0325">Glycoprotein</keyword>
<keyword id="KW-0336">GPI-anchor</keyword>
<keyword id="KW-0449">Lipoprotein</keyword>
<keyword id="KW-0472">Membrane</keyword>
<keyword id="KW-0677">Repeat</keyword>
<keyword id="KW-0964">Secreted</keyword>
<keyword id="KW-0732">Signal</keyword>
<name>TX101_CRIGR</name>
<accession>Q7TQN2</accession>
<protein>
    <recommendedName>
        <fullName evidence="3">Testis-expressed protein 101</fullName>
    </recommendedName>
    <alternativeName>
        <fullName>Lipid raft-associated glycoprotein TEC-21</fullName>
    </alternativeName>
</protein>
<gene>
    <name evidence="3" type="primary">TEX101</name>
</gene>
<sequence>MAACWVHYLLLLLLGVSHQTLAQSLQCAVSKVLRLEDDPSRTFNWTSKPDKVETCNPGELCQETVLLIKAEGTKTAVVASKGCASREIEAVTFIQYTPPPGVIAISYSNYCNSSLCNNSKNVSLFWKPPDTTATSKILGALSCPTCVALGSCSSAPSMPCANSTTQCYQGKIELSGGGMDSVLHIKGCTTAIGCRLMAAITSVGPMTVKETCSYHSLLQPRKAEESRASGRSTSLWVLELLLPAVLVALTHFP</sequence>
<reference key="1">
    <citation type="submission" date="2003-05" db="EMBL/GenBank/DDBJ databases">
        <authorList>
            <person name="Charvatova L."/>
            <person name="Tumova M."/>
            <person name="Draber P."/>
        </authorList>
    </citation>
    <scope>NUCLEOTIDE SEQUENCE [MRNA]</scope>
    <source>
        <tissue>Testis</tissue>
    </source>
</reference>
<comment type="function">
    <text evidence="2 4">Plays a role in fertilization by controlling binding of sperm to zona pellucida and migration of spermatozoa into the oviduct (By similarity). May play a role in signal transduction and promote protein tyrosine phosphorylation (By similarity).</text>
</comment>
<comment type="subunit">
    <text evidence="4">Interacts with VAMP3. Interacts with LY6K. Interacts with DPEP3; co-localized on the cell surface of spermatocytes, spermatids, and testicular spermatozoa, co-localized only in cytoplasmic droplets of caput and corpus epididymal sperm. Interacts with ADAM5.</text>
</comment>
<comment type="subcellular location">
    <subcellularLocation>
        <location evidence="4">Cell membrane</location>
        <topology evidence="4">Lipid-anchor</topology>
        <topology evidence="4">GPI-anchor</topology>
    </subcellularLocation>
    <subcellularLocation>
        <location evidence="4">Membrane raft</location>
    </subcellularLocation>
    <subcellularLocation>
        <location evidence="4">Cytoplasmic vesicle</location>
        <location evidence="4">Secretory vesicle</location>
        <location evidence="4">Acrosome</location>
    </subcellularLocation>
    <subcellularLocation>
        <location evidence="4">Secreted</location>
    </subcellularLocation>
    <subcellularLocation>
        <location evidence="4">Cytoplasmic vesicle</location>
    </subcellularLocation>
    <text evidence="4">Located on plasma membrane of spermatocytes, round and elongated spermatids, and testicular spermatozoa.</text>
</comment>
<comment type="PTM">
    <text evidence="4">N-glycosylated; by high mannose and/or biantennary complex and/or certain types of hybrid oligosaccharides; possesses different oligosaccharides chains according to its subcellular localization in the testis.</text>
</comment>
<comment type="PTM">
    <text evidence="4">Sheds from membrane raft by ACE and released from the cell surface of epididymal sperm while it passes through the caput epididymis leading to disappearance of TEX101 on spermatozoa; is essential to produce fertile spermatozoa.</text>
</comment>